<protein>
    <recommendedName>
        <fullName>Conodipine-M beta chain</fullName>
    </recommendedName>
</protein>
<organism>
    <name type="scientific">Conus magus</name>
    <name type="common">Magical cone</name>
    <dbReference type="NCBI Taxonomy" id="6492"/>
    <lineage>
        <taxon>Eukaryota</taxon>
        <taxon>Metazoa</taxon>
        <taxon>Spiralia</taxon>
        <taxon>Lophotrochozoa</taxon>
        <taxon>Mollusca</taxon>
        <taxon>Gastropoda</taxon>
        <taxon>Caenogastropoda</taxon>
        <taxon>Neogastropoda</taxon>
        <taxon>Conoidea</taxon>
        <taxon>Conidae</taxon>
        <taxon>Conus</taxon>
        <taxon>Pionoconus</taxon>
    </lineage>
</organism>
<reference key="1">
    <citation type="journal article" date="1995" name="J. Biol. Chem.">
        <title>Conodipine-M, a novel phospholipase A2 isolated from the venom of the marine snail Conus magus.</title>
        <authorList>
            <person name="McIntosh J.M."/>
            <person name="Ghomashchi F."/>
            <person name="Gelb M.H."/>
            <person name="Dooley D.J."/>
            <person name="Stoehr S.J."/>
            <person name="Giordani A.B."/>
            <person name="Naisbitt S.R."/>
            <person name="Olivera B.M."/>
        </authorList>
    </citation>
    <scope>PROTEIN SEQUENCE</scope>
    <scope>FUNCTION</scope>
    <scope>MASS SPECTROMETRY</scope>
    <source>
        <tissue>Venom</tissue>
    </source>
</reference>
<feature type="chain" id="PRO_0000086875" description="Conodipine-M beta chain">
    <location>
        <begin position="1"/>
        <end position="42"/>
    </location>
</feature>
<evidence type="ECO:0000269" key="1">
    <source>
    </source>
</evidence>
<proteinExistence type="evidence at protein level"/>
<name>COMB_CONMA</name>
<dbReference type="ConoServer" id="5540">
    <property type="toxin name" value="Conodipine-M beta chain"/>
</dbReference>
<dbReference type="GO" id="GO:0005576">
    <property type="term" value="C:extracellular region"/>
    <property type="evidence" value="ECO:0007669"/>
    <property type="project" value="UniProtKB-SubCell"/>
</dbReference>
<dbReference type="GO" id="GO:0090729">
    <property type="term" value="F:toxin activity"/>
    <property type="evidence" value="ECO:0007669"/>
    <property type="project" value="UniProtKB-KW"/>
</dbReference>
<dbReference type="GO" id="GO:0016042">
    <property type="term" value="P:lipid catabolic process"/>
    <property type="evidence" value="ECO:0000314"/>
    <property type="project" value="CACAO"/>
</dbReference>
<sequence length="42" mass="4962">AATCTHWALIYFKTVQLFGWXHFNYQVDATYCPQFQPCMPXX</sequence>
<keyword id="KW-0903">Direct protein sequencing</keyword>
<keyword id="KW-1015">Disulfide bond</keyword>
<keyword id="KW-0964">Secreted</keyword>
<keyword id="KW-0800">Toxin</keyword>
<comment type="function">
    <text evidence="1">Heterodimer: conodipine-M catalyzes the calcium-dependent hydrolysis of the 2-acyl groups in 3-sn-phosphoglycerides. This activity may be supported by the alpha chain. Conodipine-M inhibits the binding of isradipine (a ligand specific for L-type calcium channel) to L-type calcium channels.</text>
</comment>
<comment type="subunit">
    <text>Heterodimer of an alpha and a beta chains; probably disulfide-linked.</text>
</comment>
<comment type="subcellular location">
    <subcellularLocation>
        <location>Secreted</location>
    </subcellularLocation>
</comment>
<comment type="tissue specificity">
    <text>Expressed by the venom duct.</text>
</comment>
<comment type="mass spectrometry" mass="5036.0" method="Electrospray" evidence="1"/>
<accession>Q9TWL8</accession>